<keyword id="KW-0025">Alternative splicing</keyword>
<keyword id="KW-1185">Reference proteome</keyword>
<comment type="alternative products">
    <event type="alternative splicing"/>
    <isoform>
        <id>P0C7U1-1</id>
        <name>1</name>
        <sequence type="displayed"/>
    </isoform>
    <isoform>
        <id>P0C7U1-2</id>
        <name>2</name>
        <sequence type="described" ref="VSP_056938"/>
    </isoform>
</comment>
<comment type="tissue specificity">
    <text evidence="1">Ubiquitous. Expression is reduced with increasing age and in late-onset Alzheimer disease (LOAD) patients. This reduction is even more pronounced in patients with an affected mother.</text>
</comment>
<comment type="miscellaneous">
    <text>ASAH2B/ASAH2L is a partial paralog of ASAH2, resulting from a partial duplication of ASAH2 on chromosome 10. It has a polymorphic start codon with a single nucleotide change of the original ASAH2 sequence plus other putative translation start site that might lead to several potential ORFs.</text>
</comment>
<comment type="similarity">
    <text evidence="3">Belongs to the neutral ceramidase family.</text>
</comment>
<comment type="caution">
    <text evidence="3">In contrast to other members of the family, ASAH2B has no predicted transmembrane domain, and lacks the active site, suggesting that it may be catalytically inactive.</text>
</comment>
<proteinExistence type="evidence at transcript level"/>
<dbReference type="EMBL" id="AK294369">
    <property type="protein sequence ID" value="BAH11747.1"/>
    <property type="molecule type" value="mRNA"/>
</dbReference>
<dbReference type="EMBL" id="AL589794">
    <property type="status" value="NOT_ANNOTATED_CDS"/>
    <property type="molecule type" value="Genomic_DNA"/>
</dbReference>
<dbReference type="CCDS" id="CCDS31203.1">
    <molecule id="P0C7U1-1"/>
</dbReference>
<dbReference type="CCDS" id="CCDS81465.1">
    <molecule id="P0C7U1-2"/>
</dbReference>
<dbReference type="RefSeq" id="NP_001072984.1">
    <molecule id="P0C7U1-1"/>
    <property type="nucleotide sequence ID" value="NM_001079516.4"/>
</dbReference>
<dbReference type="RefSeq" id="NP_001308886.1">
    <molecule id="P0C7U1-1"/>
    <property type="nucleotide sequence ID" value="NM_001321957.2"/>
</dbReference>
<dbReference type="RefSeq" id="NP_001308887.1">
    <molecule id="P0C7U1-2"/>
    <property type="nucleotide sequence ID" value="NM_001321958.2"/>
</dbReference>
<dbReference type="RefSeq" id="NP_001308888.1">
    <molecule id="P0C7U1-2"/>
    <property type="nucleotide sequence ID" value="NM_001321959.2"/>
</dbReference>
<dbReference type="RefSeq" id="NP_001308889.1">
    <molecule id="P0C7U1-2"/>
    <property type="nucleotide sequence ID" value="NM_001321960.2"/>
</dbReference>
<dbReference type="SMR" id="P0C7U1"/>
<dbReference type="BioGRID" id="575684">
    <property type="interactions" value="1"/>
</dbReference>
<dbReference type="STRING" id="9606.ENSP00000495463"/>
<dbReference type="iPTMnet" id="P0C7U1"/>
<dbReference type="PhosphoSitePlus" id="P0C7U1"/>
<dbReference type="BioMuta" id="ASAH2B"/>
<dbReference type="MassIVE" id="P0C7U1"/>
<dbReference type="PaxDb" id="9606-ENSP00000363118"/>
<dbReference type="PeptideAtlas" id="P0C7U1"/>
<dbReference type="ProteomicsDB" id="52369">
    <molecule id="P0C7U1-1"/>
</dbReference>
<dbReference type="ProteomicsDB" id="6411"/>
<dbReference type="Antibodypedia" id="62326">
    <property type="antibodies" value="1 antibodies from 1 providers"/>
</dbReference>
<dbReference type="DNASU" id="653308"/>
<dbReference type="Ensembl" id="ENST00000374006.1">
    <molecule id="P0C7U1-1"/>
    <property type="protein sequence ID" value="ENSP00000363118.1"/>
    <property type="gene ID" value="ENSG00000204147.11"/>
</dbReference>
<dbReference type="Ensembl" id="ENST00000374007.5">
    <molecule id="P0C7U1-2"/>
    <property type="protein sequence ID" value="ENSP00000363119.1"/>
    <property type="gene ID" value="ENSG00000204147.11"/>
</dbReference>
<dbReference type="Ensembl" id="ENST00000643851.1">
    <molecule id="P0C7U1-1"/>
    <property type="protein sequence ID" value="ENSP00000495463.1"/>
    <property type="gene ID" value="ENSG00000204147.11"/>
</dbReference>
<dbReference type="Ensembl" id="ENST00000647317.2">
    <molecule id="P0C7U1-2"/>
    <property type="protein sequence ID" value="ENSP00000496089.1"/>
    <property type="gene ID" value="ENSG00000204147.11"/>
</dbReference>
<dbReference type="GeneID" id="653308"/>
<dbReference type="KEGG" id="hsa:653308"/>
<dbReference type="MANE-Select" id="ENST00000647317.2">
    <molecule id="P0C7U1-2"/>
    <property type="protein sequence ID" value="ENSP00000496089.1"/>
    <property type="RefSeq nucleotide sequence ID" value="NM_001321958.2"/>
    <property type="RefSeq protein sequence ID" value="NP_001308887.1"/>
</dbReference>
<dbReference type="UCSC" id="uc001jjg.5">
    <molecule id="P0C7U1-1"/>
    <property type="organism name" value="human"/>
</dbReference>
<dbReference type="AGR" id="HGNC:23456"/>
<dbReference type="CTD" id="653308"/>
<dbReference type="DisGeNET" id="653308"/>
<dbReference type="GeneCards" id="ASAH2B"/>
<dbReference type="HGNC" id="HGNC:23456">
    <property type="gene designation" value="ASAH2B"/>
</dbReference>
<dbReference type="HPA" id="ENSG00000204147">
    <property type="expression patterns" value="Tissue enhanced (intestine)"/>
</dbReference>
<dbReference type="MIM" id="610987">
    <property type="type" value="gene"/>
</dbReference>
<dbReference type="neXtProt" id="NX_P0C7U1"/>
<dbReference type="OpenTargets" id="ENSG00000204147"/>
<dbReference type="PharmGKB" id="PA134977109"/>
<dbReference type="VEuPathDB" id="HostDB:ENSG00000204147"/>
<dbReference type="eggNOG" id="KOG2232">
    <property type="taxonomic scope" value="Eukaryota"/>
</dbReference>
<dbReference type="GeneTree" id="ENSGT00390000015792"/>
<dbReference type="HOGENOM" id="CLU_086144_1_0_1"/>
<dbReference type="InParanoid" id="P0C7U1"/>
<dbReference type="OMA" id="GCQTHIL"/>
<dbReference type="OrthoDB" id="191371at2759"/>
<dbReference type="PAN-GO" id="P0C7U1">
    <property type="GO annotations" value="5 GO annotations based on evolutionary models"/>
</dbReference>
<dbReference type="PhylomeDB" id="P0C7U1"/>
<dbReference type="PathwayCommons" id="P0C7U1"/>
<dbReference type="BioGRID-ORCS" id="653308">
    <property type="hits" value="12 hits in 1057 CRISPR screens"/>
</dbReference>
<dbReference type="ChiTaRS" id="ASAH2B">
    <property type="organism name" value="human"/>
</dbReference>
<dbReference type="GeneWiki" id="ASAH2B"/>
<dbReference type="GenomeRNAi" id="653308"/>
<dbReference type="Pharos" id="P0C7U1">
    <property type="development level" value="Tdark"/>
</dbReference>
<dbReference type="PRO" id="PR:P0C7U1"/>
<dbReference type="Proteomes" id="UP000005640">
    <property type="component" value="Chromosome 10"/>
</dbReference>
<dbReference type="RNAct" id="P0C7U1">
    <property type="molecule type" value="protein"/>
</dbReference>
<dbReference type="Bgee" id="ENSG00000204147">
    <property type="expression patterns" value="Expressed in duodenum and 107 other cell types or tissues"/>
</dbReference>
<dbReference type="ExpressionAtlas" id="P0C7U1">
    <property type="expression patterns" value="baseline and differential"/>
</dbReference>
<dbReference type="GO" id="GO:0016020">
    <property type="term" value="C:membrane"/>
    <property type="evidence" value="ECO:0007669"/>
    <property type="project" value="GOC"/>
</dbReference>
<dbReference type="GO" id="GO:0017040">
    <property type="term" value="F:N-acylsphingosine amidohydrolase activity"/>
    <property type="evidence" value="ECO:0007669"/>
    <property type="project" value="InterPro"/>
</dbReference>
<dbReference type="GO" id="GO:0046514">
    <property type="term" value="P:ceramide catabolic process"/>
    <property type="evidence" value="ECO:0007669"/>
    <property type="project" value="InterPro"/>
</dbReference>
<dbReference type="FunFam" id="2.60.40.2300:FF:000001">
    <property type="entry name" value="N-acylsphingosine amidohydrolase 2"/>
    <property type="match status" value="1"/>
</dbReference>
<dbReference type="Gene3D" id="2.60.40.2300">
    <property type="entry name" value="Neutral/alkaline non-lysosomal ceramidase, C-terminal domain"/>
    <property type="match status" value="1"/>
</dbReference>
<dbReference type="InterPro" id="IPR006823">
    <property type="entry name" value="Ceramidase_alk"/>
</dbReference>
<dbReference type="InterPro" id="IPR038445">
    <property type="entry name" value="NCDase_C_sf"/>
</dbReference>
<dbReference type="InterPro" id="IPR031331">
    <property type="entry name" value="NEUT/ALK_ceramidase_C"/>
</dbReference>
<dbReference type="PANTHER" id="PTHR12670">
    <property type="entry name" value="CERAMIDASE"/>
    <property type="match status" value="1"/>
</dbReference>
<dbReference type="PANTHER" id="PTHR12670:SF1">
    <property type="entry name" value="NEUTRAL CERAMIDASE"/>
    <property type="match status" value="1"/>
</dbReference>
<dbReference type="Pfam" id="PF17048">
    <property type="entry name" value="Ceramidse_alk_C"/>
    <property type="match status" value="1"/>
</dbReference>
<feature type="chain" id="PRO_0000343741" description="Putative inactive neutral ceramidase B">
    <location>
        <begin position="1"/>
        <end position="165"/>
    </location>
</feature>
<feature type="splice variant" id="VSP_056938" description="In isoform 2." evidence="2">
    <original>MRQHRQFMDRTHYLLTFSSSETLLRLLLR</original>
    <variation>MVANLSRGPEPPFFKQLIVPLIPS</variation>
    <location>
        <begin position="1"/>
        <end position="29"/>
    </location>
</feature>
<organism>
    <name type="scientific">Homo sapiens</name>
    <name type="common">Human</name>
    <dbReference type="NCBI Taxonomy" id="9606"/>
    <lineage>
        <taxon>Eukaryota</taxon>
        <taxon>Metazoa</taxon>
        <taxon>Chordata</taxon>
        <taxon>Craniata</taxon>
        <taxon>Vertebrata</taxon>
        <taxon>Euteleostomi</taxon>
        <taxon>Mammalia</taxon>
        <taxon>Eutheria</taxon>
        <taxon>Euarchontoglires</taxon>
        <taxon>Primates</taxon>
        <taxon>Haplorrhini</taxon>
        <taxon>Catarrhini</taxon>
        <taxon>Hominidae</taxon>
        <taxon>Homo</taxon>
    </lineage>
</organism>
<name>ASA2B_HUMAN</name>
<gene>
    <name evidence="4" type="primary">ASAH2B</name>
    <name evidence="4" type="synonym">ASAH2C</name>
    <name evidence="4" type="synonym">ASAH2L</name>
</gene>
<protein>
    <recommendedName>
        <fullName evidence="3">Putative inactive neutral ceramidase B</fullName>
    </recommendedName>
    <alternativeName>
        <fullName evidence="3">ASAH2-like protein</fullName>
    </alternativeName>
    <alternativeName>
        <fullName evidence="3">Putative inactive N-acylsphingosine amidohydrolase 2B</fullName>
    </alternativeName>
    <alternativeName>
        <fullName evidence="3">Putative inactive non-lysosomal ceramidase B</fullName>
    </alternativeName>
</protein>
<reference key="1">
    <citation type="journal article" date="2004" name="Nat. Genet.">
        <title>Complete sequencing and characterization of 21,243 full-length human cDNAs.</title>
        <authorList>
            <person name="Ota T."/>
            <person name="Suzuki Y."/>
            <person name="Nishikawa T."/>
            <person name="Otsuki T."/>
            <person name="Sugiyama T."/>
            <person name="Irie R."/>
            <person name="Wakamatsu A."/>
            <person name="Hayashi K."/>
            <person name="Sato H."/>
            <person name="Nagai K."/>
            <person name="Kimura K."/>
            <person name="Makita H."/>
            <person name="Sekine M."/>
            <person name="Obayashi M."/>
            <person name="Nishi T."/>
            <person name="Shibahara T."/>
            <person name="Tanaka T."/>
            <person name="Ishii S."/>
            <person name="Yamamoto J."/>
            <person name="Saito K."/>
            <person name="Kawai Y."/>
            <person name="Isono Y."/>
            <person name="Nakamura Y."/>
            <person name="Nagahari K."/>
            <person name="Murakami K."/>
            <person name="Yasuda T."/>
            <person name="Iwayanagi T."/>
            <person name="Wagatsuma M."/>
            <person name="Shiratori A."/>
            <person name="Sudo H."/>
            <person name="Hosoiri T."/>
            <person name="Kaku Y."/>
            <person name="Kodaira H."/>
            <person name="Kondo H."/>
            <person name="Sugawara M."/>
            <person name="Takahashi M."/>
            <person name="Kanda K."/>
            <person name="Yokoi T."/>
            <person name="Furuya T."/>
            <person name="Kikkawa E."/>
            <person name="Omura Y."/>
            <person name="Abe K."/>
            <person name="Kamihara K."/>
            <person name="Katsuta N."/>
            <person name="Sato K."/>
            <person name="Tanikawa M."/>
            <person name="Yamazaki M."/>
            <person name="Ninomiya K."/>
            <person name="Ishibashi T."/>
            <person name="Yamashita H."/>
            <person name="Murakawa K."/>
            <person name="Fujimori K."/>
            <person name="Tanai H."/>
            <person name="Kimata M."/>
            <person name="Watanabe M."/>
            <person name="Hiraoka S."/>
            <person name="Chiba Y."/>
            <person name="Ishida S."/>
            <person name="Ono Y."/>
            <person name="Takiguchi S."/>
            <person name="Watanabe S."/>
            <person name="Yosida M."/>
            <person name="Hotuta T."/>
            <person name="Kusano J."/>
            <person name="Kanehori K."/>
            <person name="Takahashi-Fujii A."/>
            <person name="Hara H."/>
            <person name="Tanase T.-O."/>
            <person name="Nomura Y."/>
            <person name="Togiya S."/>
            <person name="Komai F."/>
            <person name="Hara R."/>
            <person name="Takeuchi K."/>
            <person name="Arita M."/>
            <person name="Imose N."/>
            <person name="Musashino K."/>
            <person name="Yuuki H."/>
            <person name="Oshima A."/>
            <person name="Sasaki N."/>
            <person name="Aotsuka S."/>
            <person name="Yoshikawa Y."/>
            <person name="Matsunawa H."/>
            <person name="Ichihara T."/>
            <person name="Shiohata N."/>
            <person name="Sano S."/>
            <person name="Moriya S."/>
            <person name="Momiyama H."/>
            <person name="Satoh N."/>
            <person name="Takami S."/>
            <person name="Terashima Y."/>
            <person name="Suzuki O."/>
            <person name="Nakagawa S."/>
            <person name="Senoh A."/>
            <person name="Mizoguchi H."/>
            <person name="Goto Y."/>
            <person name="Shimizu F."/>
            <person name="Wakebe H."/>
            <person name="Hishigaki H."/>
            <person name="Watanabe T."/>
            <person name="Sugiyama A."/>
            <person name="Takemoto M."/>
            <person name="Kawakami B."/>
            <person name="Yamazaki M."/>
            <person name="Watanabe K."/>
            <person name="Kumagai A."/>
            <person name="Itakura S."/>
            <person name="Fukuzumi Y."/>
            <person name="Fujimori Y."/>
            <person name="Komiyama M."/>
            <person name="Tashiro H."/>
            <person name="Tanigami A."/>
            <person name="Fujiwara T."/>
            <person name="Ono T."/>
            <person name="Yamada K."/>
            <person name="Fujii Y."/>
            <person name="Ozaki K."/>
            <person name="Hirao M."/>
            <person name="Ohmori Y."/>
            <person name="Kawabata A."/>
            <person name="Hikiji T."/>
            <person name="Kobatake N."/>
            <person name="Inagaki H."/>
            <person name="Ikema Y."/>
            <person name="Okamoto S."/>
            <person name="Okitani R."/>
            <person name="Kawakami T."/>
            <person name="Noguchi S."/>
            <person name="Itoh T."/>
            <person name="Shigeta K."/>
            <person name="Senba T."/>
            <person name="Matsumura K."/>
            <person name="Nakajima Y."/>
            <person name="Mizuno T."/>
            <person name="Morinaga M."/>
            <person name="Sasaki M."/>
            <person name="Togashi T."/>
            <person name="Oyama M."/>
            <person name="Hata H."/>
            <person name="Watanabe M."/>
            <person name="Komatsu T."/>
            <person name="Mizushima-Sugano J."/>
            <person name="Satoh T."/>
            <person name="Shirai Y."/>
            <person name="Takahashi Y."/>
            <person name="Nakagawa K."/>
            <person name="Okumura K."/>
            <person name="Nagase T."/>
            <person name="Nomura N."/>
            <person name="Kikuchi H."/>
            <person name="Masuho Y."/>
            <person name="Yamashita R."/>
            <person name="Nakai K."/>
            <person name="Yada T."/>
            <person name="Nakamura Y."/>
            <person name="Ohara O."/>
            <person name="Isogai T."/>
            <person name="Sugano S."/>
        </authorList>
    </citation>
    <scope>NUCLEOTIDE SEQUENCE [LARGE SCALE MRNA] (ISOFORM 2)</scope>
    <source>
        <tissue>Amygdala</tissue>
    </source>
</reference>
<reference key="2">
    <citation type="journal article" date="2004" name="Nature">
        <title>The DNA sequence and comparative analysis of human chromosome 10.</title>
        <authorList>
            <person name="Deloukas P."/>
            <person name="Earthrowl M.E."/>
            <person name="Grafham D.V."/>
            <person name="Rubenfield M."/>
            <person name="French L."/>
            <person name="Steward C.A."/>
            <person name="Sims S.K."/>
            <person name="Jones M.C."/>
            <person name="Searle S."/>
            <person name="Scott C."/>
            <person name="Howe K."/>
            <person name="Hunt S.E."/>
            <person name="Andrews T.D."/>
            <person name="Gilbert J.G.R."/>
            <person name="Swarbreck D."/>
            <person name="Ashurst J.L."/>
            <person name="Taylor A."/>
            <person name="Battles J."/>
            <person name="Bird C.P."/>
            <person name="Ainscough R."/>
            <person name="Almeida J.P."/>
            <person name="Ashwell R.I.S."/>
            <person name="Ambrose K.D."/>
            <person name="Babbage A.K."/>
            <person name="Bagguley C.L."/>
            <person name="Bailey J."/>
            <person name="Banerjee R."/>
            <person name="Bates K."/>
            <person name="Beasley H."/>
            <person name="Bray-Allen S."/>
            <person name="Brown A.J."/>
            <person name="Brown J.Y."/>
            <person name="Burford D.C."/>
            <person name="Burrill W."/>
            <person name="Burton J."/>
            <person name="Cahill P."/>
            <person name="Camire D."/>
            <person name="Carter N.P."/>
            <person name="Chapman J.C."/>
            <person name="Clark S.Y."/>
            <person name="Clarke G."/>
            <person name="Clee C.M."/>
            <person name="Clegg S."/>
            <person name="Corby N."/>
            <person name="Coulson A."/>
            <person name="Dhami P."/>
            <person name="Dutta I."/>
            <person name="Dunn M."/>
            <person name="Faulkner L."/>
            <person name="Frankish A."/>
            <person name="Frankland J.A."/>
            <person name="Garner P."/>
            <person name="Garnett J."/>
            <person name="Gribble S."/>
            <person name="Griffiths C."/>
            <person name="Grocock R."/>
            <person name="Gustafson E."/>
            <person name="Hammond S."/>
            <person name="Harley J.L."/>
            <person name="Hart E."/>
            <person name="Heath P.D."/>
            <person name="Ho T.P."/>
            <person name="Hopkins B."/>
            <person name="Horne J."/>
            <person name="Howden P.J."/>
            <person name="Huckle E."/>
            <person name="Hynds C."/>
            <person name="Johnson C."/>
            <person name="Johnson D."/>
            <person name="Kana A."/>
            <person name="Kay M."/>
            <person name="Kimberley A.M."/>
            <person name="Kershaw J.K."/>
            <person name="Kokkinaki M."/>
            <person name="Laird G.K."/>
            <person name="Lawlor S."/>
            <person name="Lee H.M."/>
            <person name="Leongamornlert D.A."/>
            <person name="Laird G."/>
            <person name="Lloyd C."/>
            <person name="Lloyd D.M."/>
            <person name="Loveland J."/>
            <person name="Lovell J."/>
            <person name="McLaren S."/>
            <person name="McLay K.E."/>
            <person name="McMurray A."/>
            <person name="Mashreghi-Mohammadi M."/>
            <person name="Matthews L."/>
            <person name="Milne S."/>
            <person name="Nickerson T."/>
            <person name="Nguyen M."/>
            <person name="Overton-Larty E."/>
            <person name="Palmer S.A."/>
            <person name="Pearce A.V."/>
            <person name="Peck A.I."/>
            <person name="Pelan S."/>
            <person name="Phillimore B."/>
            <person name="Porter K."/>
            <person name="Rice C.M."/>
            <person name="Rogosin A."/>
            <person name="Ross M.T."/>
            <person name="Sarafidou T."/>
            <person name="Sehra H.K."/>
            <person name="Shownkeen R."/>
            <person name="Skuce C.D."/>
            <person name="Smith M."/>
            <person name="Standring L."/>
            <person name="Sycamore N."/>
            <person name="Tester J."/>
            <person name="Thorpe A."/>
            <person name="Torcasso W."/>
            <person name="Tracey A."/>
            <person name="Tromans A."/>
            <person name="Tsolas J."/>
            <person name="Wall M."/>
            <person name="Walsh J."/>
            <person name="Wang H."/>
            <person name="Weinstock K."/>
            <person name="West A.P."/>
            <person name="Willey D.L."/>
            <person name="Whitehead S.L."/>
            <person name="Wilming L."/>
            <person name="Wray P.W."/>
            <person name="Young L."/>
            <person name="Chen Y."/>
            <person name="Lovering R.C."/>
            <person name="Moschonas N.K."/>
            <person name="Siebert R."/>
            <person name="Fechtel K."/>
            <person name="Bentley D."/>
            <person name="Durbin R.M."/>
            <person name="Hubbard T."/>
            <person name="Doucette-Stamm L."/>
            <person name="Beck S."/>
            <person name="Smith D.R."/>
            <person name="Rogers J."/>
        </authorList>
    </citation>
    <scope>NUCLEOTIDE SEQUENCE [LARGE SCALE GENOMIC DNA]</scope>
</reference>
<reference key="3">
    <citation type="journal article" date="2007" name="Neurogenetics">
        <title>A novel gene derived from a segmental duplication shows perturbed expression in Alzheimer's disease.</title>
        <authorList>
            <person name="Avramopoulos D."/>
            <person name="Wang R."/>
            <person name="Valle D."/>
            <person name="Fallin M.D."/>
            <person name="Bassett S.S."/>
        </authorList>
    </citation>
    <scope>TISSUE SPECIFICITY</scope>
</reference>
<sequence length="165" mass="19025">MRQHRQFMDRTHYLLTFSSSETLLRLLLRIVDRAPKGRTFGDVLQPAKPEYRVGEVAEVIFVGANPKNSVQNQTHQTFLTVEKYEATSTSWQIVCNDASWETRFYWHKGLLGLSNATVEWHIPDTAQPGIYRIRYFGHNRKQDILKPAVILSFEGTSPAFEVVTI</sequence>
<accession>P0C7U1</accession>
<accession>B7Z261</accession>
<evidence type="ECO:0000269" key="1">
    <source>
    </source>
</evidence>
<evidence type="ECO:0000303" key="2">
    <source>
    </source>
</evidence>
<evidence type="ECO:0000305" key="3"/>
<evidence type="ECO:0000312" key="4">
    <source>
        <dbReference type="HGNC" id="HGNC:23456"/>
    </source>
</evidence>